<feature type="chain" id="PRO_1000068752" description="tRNA(Met) cytidine acetate ligase">
    <location>
        <begin position="1"/>
        <end position="377"/>
    </location>
</feature>
<feature type="binding site" evidence="1">
    <location>
        <begin position="7"/>
        <end position="20"/>
    </location>
    <ligand>
        <name>ATP</name>
        <dbReference type="ChEBI" id="CHEBI:30616"/>
    </ligand>
</feature>
<feature type="binding site" evidence="1">
    <location>
        <position position="101"/>
    </location>
    <ligand>
        <name>ATP</name>
        <dbReference type="ChEBI" id="CHEBI:30616"/>
    </ligand>
</feature>
<feature type="binding site" evidence="1">
    <location>
        <position position="151"/>
    </location>
    <ligand>
        <name>ATP</name>
        <dbReference type="ChEBI" id="CHEBI:30616"/>
    </ligand>
</feature>
<feature type="binding site" evidence="1">
    <location>
        <position position="176"/>
    </location>
    <ligand>
        <name>ATP</name>
        <dbReference type="ChEBI" id="CHEBI:30616"/>
    </ligand>
</feature>
<name>TMCAL_LIMRD</name>
<dbReference type="EC" id="6.3.4.-" evidence="1"/>
<dbReference type="EMBL" id="CP000705">
    <property type="protein sequence ID" value="ABQ83488.1"/>
    <property type="molecule type" value="Genomic_DNA"/>
</dbReference>
<dbReference type="RefSeq" id="WP_003668476.1">
    <property type="nucleotide sequence ID" value="NC_009513.1"/>
</dbReference>
<dbReference type="SMR" id="A5VKW4"/>
<dbReference type="STRING" id="557436.Lreu_1231"/>
<dbReference type="KEGG" id="lre:Lreu_1231"/>
<dbReference type="PATRIC" id="fig|557436.17.peg.99"/>
<dbReference type="eggNOG" id="COG1323">
    <property type="taxonomic scope" value="Bacteria"/>
</dbReference>
<dbReference type="HOGENOM" id="CLU_038915_0_2_9"/>
<dbReference type="Proteomes" id="UP000001991">
    <property type="component" value="Chromosome"/>
</dbReference>
<dbReference type="GO" id="GO:0005737">
    <property type="term" value="C:cytoplasm"/>
    <property type="evidence" value="ECO:0007669"/>
    <property type="project" value="UniProtKB-SubCell"/>
</dbReference>
<dbReference type="GO" id="GO:0005524">
    <property type="term" value="F:ATP binding"/>
    <property type="evidence" value="ECO:0007669"/>
    <property type="project" value="UniProtKB-KW"/>
</dbReference>
<dbReference type="GO" id="GO:0016879">
    <property type="term" value="F:ligase activity, forming carbon-nitrogen bonds"/>
    <property type="evidence" value="ECO:0007669"/>
    <property type="project" value="UniProtKB-UniRule"/>
</dbReference>
<dbReference type="GO" id="GO:0000049">
    <property type="term" value="F:tRNA binding"/>
    <property type="evidence" value="ECO:0007669"/>
    <property type="project" value="UniProtKB-KW"/>
</dbReference>
<dbReference type="GO" id="GO:0006400">
    <property type="term" value="P:tRNA modification"/>
    <property type="evidence" value="ECO:0007669"/>
    <property type="project" value="UniProtKB-UniRule"/>
</dbReference>
<dbReference type="Gene3D" id="3.40.50.620">
    <property type="entry name" value="HUPs"/>
    <property type="match status" value="1"/>
</dbReference>
<dbReference type="HAMAP" id="MF_01539">
    <property type="entry name" value="TmcAL"/>
    <property type="match status" value="1"/>
</dbReference>
<dbReference type="InterPro" id="IPR014729">
    <property type="entry name" value="Rossmann-like_a/b/a_fold"/>
</dbReference>
<dbReference type="InterPro" id="IPR008513">
    <property type="entry name" value="tRNA(Met)_cyd_acetate_ligase"/>
</dbReference>
<dbReference type="NCBIfam" id="NF010191">
    <property type="entry name" value="PRK13670.1"/>
    <property type="match status" value="1"/>
</dbReference>
<dbReference type="PANTHER" id="PTHR37825">
    <property type="entry name" value="TRNA(MET) CYTIDINE ACETATE LIGASE"/>
    <property type="match status" value="1"/>
</dbReference>
<dbReference type="PANTHER" id="PTHR37825:SF1">
    <property type="entry name" value="TRNA(MET) CYTIDINE ACETATE LIGASE"/>
    <property type="match status" value="1"/>
</dbReference>
<dbReference type="Pfam" id="PF05636">
    <property type="entry name" value="HIGH_NTase1"/>
    <property type="match status" value="1"/>
</dbReference>
<dbReference type="SUPFAM" id="SSF52374">
    <property type="entry name" value="Nucleotidylyl transferase"/>
    <property type="match status" value="1"/>
</dbReference>
<comment type="function">
    <text evidence="1">Catalyzes the formation of N(4)-acetylcytidine (ac(4)C) at the wobble position of elongator tRNA(Met), using acetate and ATP as substrates. First activates an acetate ion to form acetyladenylate (Ac-AMP) and then transfers the acetyl group to tRNA to form ac(4)C34.</text>
</comment>
<comment type="catalytic activity">
    <reaction evidence="1">
        <text>cytidine(34) in elongator tRNA(Met) + acetate + ATP = N(4)-acetylcytidine(34) in elongator tRNA(Met) + AMP + diphosphate</text>
        <dbReference type="Rhea" id="RHEA:58144"/>
        <dbReference type="Rhea" id="RHEA-COMP:10693"/>
        <dbReference type="Rhea" id="RHEA-COMP:10694"/>
        <dbReference type="ChEBI" id="CHEBI:30089"/>
        <dbReference type="ChEBI" id="CHEBI:30616"/>
        <dbReference type="ChEBI" id="CHEBI:33019"/>
        <dbReference type="ChEBI" id="CHEBI:74900"/>
        <dbReference type="ChEBI" id="CHEBI:82748"/>
        <dbReference type="ChEBI" id="CHEBI:456215"/>
    </reaction>
</comment>
<comment type="subcellular location">
    <subcellularLocation>
        <location evidence="1">Cytoplasm</location>
    </subcellularLocation>
</comment>
<comment type="similarity">
    <text evidence="1">Belongs to the TmcAL family.</text>
</comment>
<protein>
    <recommendedName>
        <fullName evidence="1">tRNA(Met) cytidine acetate ligase</fullName>
        <ecNumber evidence="1">6.3.4.-</ecNumber>
    </recommendedName>
</protein>
<sequence>MKAVGMVVEYNPFHNGHRYHLQQAKKISEADVTVAVMSGNFTQRGEPTIVDKWSRARAAVMNGVDLVIELPLFYAVQPAHRFAGGALSLLNALGVDSIVFGSEHPEWDFARLVKAEEAFNQESFNKYNATYATQFNQQLKEQTGVTLIDPNDILAFAYTKAKINQGYHFELLPIKRQGSNYHDQQIKGKIASASAIRQAISEKGDYRQAVPQVMGDILATIKSIPLWTELYPLLRNQLIQAPVSTLQSTYLMAEGLEYRMKEAAQRSLDFNSFMKFTKTKRYTYAHLLRVCLYTILQITQEEVEKHSKHPYLHVLAFNKQGREYLHEVKKELALPLITKVDQEMRDQLLNLDYRAGKLYQLFTPVEQDLKHPPIIIN</sequence>
<proteinExistence type="inferred from homology"/>
<gene>
    <name evidence="1" type="primary">tmcAL</name>
    <name type="ordered locus">Lreu_1231</name>
</gene>
<reference key="1">
    <citation type="journal article" date="2011" name="PLoS Genet.">
        <title>The evolution of host specialization in the vertebrate gut symbiont Lactobacillus reuteri.</title>
        <authorList>
            <person name="Frese S.A."/>
            <person name="Benson A.K."/>
            <person name="Tannock G.W."/>
            <person name="Loach D.M."/>
            <person name="Kim J."/>
            <person name="Zhang M."/>
            <person name="Oh P.L."/>
            <person name="Heng N.C."/>
            <person name="Patil P.B."/>
            <person name="Juge N."/>
            <person name="Mackenzie D.A."/>
            <person name="Pearson B.M."/>
            <person name="Lapidus A."/>
            <person name="Dalin E."/>
            <person name="Tice H."/>
            <person name="Goltsman E."/>
            <person name="Land M."/>
            <person name="Hauser L."/>
            <person name="Ivanova N."/>
            <person name="Kyrpides N.C."/>
            <person name="Walter J."/>
        </authorList>
    </citation>
    <scope>NUCLEOTIDE SEQUENCE [LARGE SCALE GENOMIC DNA]</scope>
    <source>
        <strain>DSM 20016</strain>
    </source>
</reference>
<accession>A5VKW4</accession>
<keyword id="KW-0067">ATP-binding</keyword>
<keyword id="KW-0963">Cytoplasm</keyword>
<keyword id="KW-0436">Ligase</keyword>
<keyword id="KW-0547">Nucleotide-binding</keyword>
<keyword id="KW-1185">Reference proteome</keyword>
<keyword id="KW-0694">RNA-binding</keyword>
<keyword id="KW-0819">tRNA processing</keyword>
<keyword id="KW-0820">tRNA-binding</keyword>
<organism>
    <name type="scientific">Limosilactobacillus reuteri (strain DSM 20016)</name>
    <name type="common">Lactobacillus reuteri</name>
    <dbReference type="NCBI Taxonomy" id="557436"/>
    <lineage>
        <taxon>Bacteria</taxon>
        <taxon>Bacillati</taxon>
        <taxon>Bacillota</taxon>
        <taxon>Bacilli</taxon>
        <taxon>Lactobacillales</taxon>
        <taxon>Lactobacillaceae</taxon>
        <taxon>Limosilactobacillus</taxon>
    </lineage>
</organism>
<evidence type="ECO:0000255" key="1">
    <source>
        <dbReference type="HAMAP-Rule" id="MF_01539"/>
    </source>
</evidence>